<proteinExistence type="evidence at protein level"/>
<organism>
    <name type="scientific">Candida tropicalis</name>
    <name type="common">Yeast</name>
    <dbReference type="NCBI Taxonomy" id="5482"/>
    <lineage>
        <taxon>Eukaryota</taxon>
        <taxon>Fungi</taxon>
        <taxon>Dikarya</taxon>
        <taxon>Ascomycota</taxon>
        <taxon>Saccharomycotina</taxon>
        <taxon>Pichiomycetes</taxon>
        <taxon>Debaryomycetaceae</taxon>
        <taxon>Candida/Lodderomyces clade</taxon>
        <taxon>Candida</taxon>
    </lineage>
</organism>
<reference key="1">
    <citation type="journal article" date="1997" name="Eur. J. Biochem.">
        <title>Gene analysis of an NADP-linked isocitrate dehydrogenase localized in peroxisomes of the n-alkane-assimilating yeast Candida tropicalis.</title>
        <authorList>
            <person name="Kawachi H."/>
            <person name="Shimizu K."/>
            <person name="Atomi H."/>
            <person name="Sanuki S."/>
            <person name="Ueda M."/>
            <person name="Tanaka A."/>
        </authorList>
    </citation>
    <scope>NUCLEOTIDE SEQUENCE [GENOMIC DNA]</scope>
    <scope>PROTEIN SEQUENCE OF 2-16</scope>
    <source>
        <strain>ATCC 20336 / pK233 / NCYC 997</strain>
    </source>
</reference>
<feature type="initiator methionine" description="Removed" evidence="2">
    <location>
        <position position="1"/>
    </location>
</feature>
<feature type="chain" id="PRO_0000083583" description="Isocitrate dehydrogenase [NADP] peroxisomal">
    <location>
        <begin position="2"/>
        <end position="411"/>
    </location>
</feature>
<feature type="binding site" evidence="1">
    <location>
        <begin position="78"/>
        <end position="80"/>
    </location>
    <ligand>
        <name>NADP(+)</name>
        <dbReference type="ChEBI" id="CHEBI:58349"/>
    </ligand>
</feature>
<feature type="binding site" evidence="1">
    <location>
        <position position="80"/>
    </location>
    <ligand>
        <name>substrate</name>
    </ligand>
</feature>
<feature type="binding site" evidence="1">
    <location>
        <position position="85"/>
    </location>
    <ligand>
        <name>NADP(+)</name>
        <dbReference type="ChEBI" id="CHEBI:58349"/>
    </ligand>
</feature>
<feature type="binding site" evidence="1">
    <location>
        <begin position="97"/>
        <end position="103"/>
    </location>
    <ligand>
        <name>substrate</name>
    </ligand>
</feature>
<feature type="binding site" evidence="1">
    <location>
        <position position="112"/>
    </location>
    <ligand>
        <name>substrate</name>
    </ligand>
</feature>
<feature type="binding site" evidence="1">
    <location>
        <position position="135"/>
    </location>
    <ligand>
        <name>substrate</name>
    </ligand>
</feature>
<feature type="binding site" evidence="1">
    <location>
        <position position="254"/>
    </location>
    <ligand>
        <name>Mn(2+)</name>
        <dbReference type="ChEBI" id="CHEBI:29035"/>
    </ligand>
</feature>
<feature type="binding site" evidence="1">
    <location>
        <position position="262"/>
    </location>
    <ligand>
        <name>NADP(+)</name>
        <dbReference type="ChEBI" id="CHEBI:58349"/>
    </ligand>
</feature>
<feature type="binding site" evidence="1">
    <location>
        <position position="277"/>
    </location>
    <ligand>
        <name>Mn(2+)</name>
        <dbReference type="ChEBI" id="CHEBI:29035"/>
    </ligand>
</feature>
<feature type="binding site" evidence="1">
    <location>
        <begin position="312"/>
        <end position="317"/>
    </location>
    <ligand>
        <name>NADP(+)</name>
        <dbReference type="ChEBI" id="CHEBI:58349"/>
    </ligand>
</feature>
<feature type="binding site" evidence="1">
    <location>
        <position position="330"/>
    </location>
    <ligand>
        <name>NADP(+)</name>
        <dbReference type="ChEBI" id="CHEBI:58349"/>
    </ligand>
</feature>
<feature type="site" description="Critical for catalysis" evidence="1">
    <location>
        <position position="142"/>
    </location>
</feature>
<feature type="site" description="Critical for catalysis" evidence="1">
    <location>
        <position position="214"/>
    </location>
</feature>
<accession>O13294</accession>
<name>IDH2_CANTR</name>
<protein>
    <recommendedName>
        <fullName>Isocitrate dehydrogenase [NADP] peroxisomal</fullName>
        <shortName>IDH</shortName>
        <ecNumber>1.1.1.42</ecNumber>
    </recommendedName>
    <alternativeName>
        <fullName>CtIDP2</fullName>
    </alternativeName>
    <alternativeName>
        <fullName>Oxalosuccinate decarboxylase</fullName>
    </alternativeName>
    <alternativeName>
        <fullName>PS-NADP-IDH</fullName>
    </alternativeName>
</protein>
<keyword id="KW-0903">Direct protein sequencing</keyword>
<keyword id="KW-0329">Glyoxylate bypass</keyword>
<keyword id="KW-0460">Magnesium</keyword>
<keyword id="KW-0464">Manganese</keyword>
<keyword id="KW-0479">Metal-binding</keyword>
<keyword id="KW-0521">NADP</keyword>
<keyword id="KW-0560">Oxidoreductase</keyword>
<keyword id="KW-0576">Peroxisome</keyword>
<keyword id="KW-0816">Tricarboxylic acid cycle</keyword>
<dbReference type="EC" id="1.1.1.42"/>
<dbReference type="EMBL" id="AB007994">
    <property type="protein sequence ID" value="BAA22846.1"/>
    <property type="molecule type" value="Genomic_DNA"/>
</dbReference>
<dbReference type="SMR" id="O13294"/>
<dbReference type="VEuPathDB" id="FungiDB:CTMYA2_041160"/>
<dbReference type="VEuPathDB" id="FungiDB:CTRG_00909"/>
<dbReference type="GO" id="GO:0005739">
    <property type="term" value="C:mitochondrion"/>
    <property type="evidence" value="ECO:0007669"/>
    <property type="project" value="TreeGrafter"/>
</dbReference>
<dbReference type="GO" id="GO:0005777">
    <property type="term" value="C:peroxisome"/>
    <property type="evidence" value="ECO:0007669"/>
    <property type="project" value="UniProtKB-SubCell"/>
</dbReference>
<dbReference type="GO" id="GO:0004450">
    <property type="term" value="F:isocitrate dehydrogenase (NADP+) activity"/>
    <property type="evidence" value="ECO:0007669"/>
    <property type="project" value="UniProtKB-EC"/>
</dbReference>
<dbReference type="GO" id="GO:0000287">
    <property type="term" value="F:magnesium ion binding"/>
    <property type="evidence" value="ECO:0007669"/>
    <property type="project" value="InterPro"/>
</dbReference>
<dbReference type="GO" id="GO:0051287">
    <property type="term" value="F:NAD binding"/>
    <property type="evidence" value="ECO:0007669"/>
    <property type="project" value="InterPro"/>
</dbReference>
<dbReference type="GO" id="GO:0006097">
    <property type="term" value="P:glyoxylate cycle"/>
    <property type="evidence" value="ECO:0007669"/>
    <property type="project" value="UniProtKB-KW"/>
</dbReference>
<dbReference type="GO" id="GO:0006102">
    <property type="term" value="P:isocitrate metabolic process"/>
    <property type="evidence" value="ECO:0007669"/>
    <property type="project" value="InterPro"/>
</dbReference>
<dbReference type="GO" id="GO:0006739">
    <property type="term" value="P:NADP metabolic process"/>
    <property type="evidence" value="ECO:0007669"/>
    <property type="project" value="TreeGrafter"/>
</dbReference>
<dbReference type="GO" id="GO:0006099">
    <property type="term" value="P:tricarboxylic acid cycle"/>
    <property type="evidence" value="ECO:0007669"/>
    <property type="project" value="UniProtKB-KW"/>
</dbReference>
<dbReference type="FunFam" id="3.40.718.10:FF:000002">
    <property type="entry name" value="Isocitrate dehydrogenase [NADP]"/>
    <property type="match status" value="1"/>
</dbReference>
<dbReference type="Gene3D" id="3.40.718.10">
    <property type="entry name" value="Isopropylmalate Dehydrogenase"/>
    <property type="match status" value="1"/>
</dbReference>
<dbReference type="InterPro" id="IPR019818">
    <property type="entry name" value="IsoCit/isopropylmalate_DH_CS"/>
</dbReference>
<dbReference type="InterPro" id="IPR004790">
    <property type="entry name" value="Isocitrate_DH_NADP"/>
</dbReference>
<dbReference type="InterPro" id="IPR024084">
    <property type="entry name" value="IsoPropMal-DH-like_dom"/>
</dbReference>
<dbReference type="NCBIfam" id="TIGR00127">
    <property type="entry name" value="nadp_idh_euk"/>
    <property type="match status" value="1"/>
</dbReference>
<dbReference type="NCBIfam" id="NF006156">
    <property type="entry name" value="PRK08299.1"/>
    <property type="match status" value="1"/>
</dbReference>
<dbReference type="PANTHER" id="PTHR11822:SF21">
    <property type="entry name" value="ISOCITRATE DEHYDROGENASE [NADP], MITOCHONDRIAL"/>
    <property type="match status" value="1"/>
</dbReference>
<dbReference type="PANTHER" id="PTHR11822">
    <property type="entry name" value="NADP-SPECIFIC ISOCITRATE DEHYDROGENASE"/>
    <property type="match status" value="1"/>
</dbReference>
<dbReference type="Pfam" id="PF00180">
    <property type="entry name" value="Iso_dh"/>
    <property type="match status" value="1"/>
</dbReference>
<dbReference type="PIRSF" id="PIRSF000108">
    <property type="entry name" value="IDH_NADP"/>
    <property type="match status" value="1"/>
</dbReference>
<dbReference type="SMART" id="SM01329">
    <property type="entry name" value="Iso_dh"/>
    <property type="match status" value="1"/>
</dbReference>
<dbReference type="SUPFAM" id="SSF53659">
    <property type="entry name" value="Isocitrate/Isopropylmalate dehydrogenase-like"/>
    <property type="match status" value="1"/>
</dbReference>
<dbReference type="PROSITE" id="PS00470">
    <property type="entry name" value="IDH_IMDH"/>
    <property type="match status" value="1"/>
</dbReference>
<gene>
    <name type="primary">IDP2</name>
</gene>
<evidence type="ECO:0000250" key="1"/>
<evidence type="ECO:0000269" key="2">
    <source>
    </source>
</evidence>
<evidence type="ECO:0000305" key="3"/>
<sequence length="411" mass="46171">MGEIQKITVKNPIVEMDGDEMTRIIWQFIKDKLILPYLNVDLKYYDLGIEYRDKTDDKVTTDAAEAILQYGVGVKCATITPDEARVKEFNLKKMWLSPNGTLRNVIGGTVFREPIVIDNIPRIVPSWEKPIIIGRHAFGDQYKATDVVIPAAGDLKLVFKPKDGGEVQEFPVYQFDGPGVALSMYNTDASITDFAESSFQLAIERKLNLFSSTKNTILKKYDGKFKDIFEGLYASKYKTKMDELGIWYEHRLIDDMVAQMLKSKGGYIIAMKNYDGDVQSDIVAQGFGSLGLMTSVLVTPDGKAFESEAAHGTVTRHYRQHQQGKETSTNSIASIYAWTRGLIQRGKLDDTPEVVKFAEELEKAVIETVSKDNIMTKDLALTQGKTDRSSYVTTEEFIDGVANRLNKNLGY</sequence>
<comment type="function">
    <text>May play a role in N-alkane metabolism, glutamate synthesis, and/or NADPH generation in the peroxisomes.</text>
</comment>
<comment type="catalytic activity">
    <reaction>
        <text>D-threo-isocitrate + NADP(+) = 2-oxoglutarate + CO2 + NADPH</text>
        <dbReference type="Rhea" id="RHEA:19629"/>
        <dbReference type="ChEBI" id="CHEBI:15562"/>
        <dbReference type="ChEBI" id="CHEBI:16526"/>
        <dbReference type="ChEBI" id="CHEBI:16810"/>
        <dbReference type="ChEBI" id="CHEBI:57783"/>
        <dbReference type="ChEBI" id="CHEBI:58349"/>
        <dbReference type="EC" id="1.1.1.42"/>
    </reaction>
</comment>
<comment type="cofactor">
    <cofactor evidence="1">
        <name>Mg(2+)</name>
        <dbReference type="ChEBI" id="CHEBI:18420"/>
    </cofactor>
    <cofactor evidence="1">
        <name>Mn(2+)</name>
        <dbReference type="ChEBI" id="CHEBI:29035"/>
    </cofactor>
    <text evidence="1">Binds 1 Mg(2+) or Mn(2+) ion per subunit.</text>
</comment>
<comment type="subcellular location">
    <subcellularLocation>
        <location>Peroxisome</location>
    </subcellularLocation>
</comment>
<comment type="induction">
    <text>By N-alkanes.</text>
</comment>
<comment type="similarity">
    <text evidence="3">Belongs to the isocitrate and isopropylmalate dehydrogenases family.</text>
</comment>